<comment type="catalytic activity">
    <reaction evidence="1">
        <text>allantoate + H2O = (S)-ureidoglycolate + urea</text>
        <dbReference type="Rhea" id="RHEA:11016"/>
        <dbReference type="ChEBI" id="CHEBI:15377"/>
        <dbReference type="ChEBI" id="CHEBI:16199"/>
        <dbReference type="ChEBI" id="CHEBI:17536"/>
        <dbReference type="ChEBI" id="CHEBI:57296"/>
        <dbReference type="EC" id="3.5.3.4"/>
    </reaction>
</comment>
<comment type="pathway">
    <text evidence="1">Nitrogen metabolism; (S)-allantoin degradation; (S)-ureidoglycolate from allantoate (aminidohydrolase route): step 1/1.</text>
</comment>
<comment type="similarity">
    <text evidence="1">Belongs to the allantoicase family.</text>
</comment>
<organism>
    <name type="scientific">Pseudomonas aeruginosa (strain UCBPP-PA14)</name>
    <dbReference type="NCBI Taxonomy" id="208963"/>
    <lineage>
        <taxon>Bacteria</taxon>
        <taxon>Pseudomonadati</taxon>
        <taxon>Pseudomonadota</taxon>
        <taxon>Gammaproteobacteria</taxon>
        <taxon>Pseudomonadales</taxon>
        <taxon>Pseudomonadaceae</taxon>
        <taxon>Pseudomonas</taxon>
    </lineage>
</organism>
<proteinExistence type="inferred from homology"/>
<name>ALLC_PSEAB</name>
<sequence length="332" mass="36771">MNAKHAPFRHYLDLADARLGSQVVAVSDEWFAPASRMLQAGEPVWKEGVFDDSGKWMDGWETRRKRFEGHDQAVIRLGVPGVLKGVDIDTRFFTGNHPPAASLDGCFCTEGDPDDSTSWSEVLPAVGLQGDSHHYHPIDDERPWTHLRLNIYPDGGIARLRLYGVPYRDWSSLPPGTALDLAAAVNGGRALACSDQHFGRMGNLLNPGRAINMGDGWETGRRRTPGHDWVIVALGHPGSIEAAVVDTLHFKGNYPESCSIQAAFVEGGNEARIEAQSLFWRELLPAQKLEMHQEHRFERHLNALGPITHVRLNIFPDGGVSRLRLFGSPQLP</sequence>
<dbReference type="EC" id="3.5.3.4" evidence="1"/>
<dbReference type="EMBL" id="CP000438">
    <property type="protein sequence ID" value="ABJ10695.1"/>
    <property type="molecule type" value="Genomic_DNA"/>
</dbReference>
<dbReference type="RefSeq" id="WP_003110786.1">
    <property type="nucleotide sequence ID" value="NZ_CP034244.1"/>
</dbReference>
<dbReference type="SMR" id="Q02JZ8"/>
<dbReference type="KEGG" id="pau:PA14_44850"/>
<dbReference type="PseudoCAP" id="PA14_44850"/>
<dbReference type="HOGENOM" id="CLU_038797_1_2_6"/>
<dbReference type="BioCyc" id="PAER208963:G1G74-3768-MONOMER"/>
<dbReference type="UniPathway" id="UPA00395">
    <property type="reaction ID" value="UER00654"/>
</dbReference>
<dbReference type="Proteomes" id="UP000000653">
    <property type="component" value="Chromosome"/>
</dbReference>
<dbReference type="GO" id="GO:0004037">
    <property type="term" value="F:allantoicase activity"/>
    <property type="evidence" value="ECO:0007669"/>
    <property type="project" value="UniProtKB-UniRule"/>
</dbReference>
<dbReference type="GO" id="GO:0000256">
    <property type="term" value="P:allantoin catabolic process"/>
    <property type="evidence" value="ECO:0007669"/>
    <property type="project" value="UniProtKB-UniRule"/>
</dbReference>
<dbReference type="GO" id="GO:0006144">
    <property type="term" value="P:purine nucleobase metabolic process"/>
    <property type="evidence" value="ECO:0007669"/>
    <property type="project" value="UniProtKB-KW"/>
</dbReference>
<dbReference type="FunFam" id="2.60.120.260:FF:000059">
    <property type="entry name" value="Probable allantoicase"/>
    <property type="match status" value="1"/>
</dbReference>
<dbReference type="FunFam" id="2.60.120.260:FF:000090">
    <property type="entry name" value="Probable allantoicase"/>
    <property type="match status" value="1"/>
</dbReference>
<dbReference type="Gene3D" id="2.60.120.260">
    <property type="entry name" value="Galactose-binding domain-like"/>
    <property type="match status" value="2"/>
</dbReference>
<dbReference type="HAMAP" id="MF_00813">
    <property type="entry name" value="Allantoicase"/>
    <property type="match status" value="1"/>
</dbReference>
<dbReference type="InterPro" id="IPR005164">
    <property type="entry name" value="Allantoicase"/>
</dbReference>
<dbReference type="InterPro" id="IPR015908">
    <property type="entry name" value="Allantoicase_dom"/>
</dbReference>
<dbReference type="InterPro" id="IPR008979">
    <property type="entry name" value="Galactose-bd-like_sf"/>
</dbReference>
<dbReference type="NCBIfam" id="TIGR02961">
    <property type="entry name" value="allantoicase"/>
    <property type="match status" value="1"/>
</dbReference>
<dbReference type="PANTHER" id="PTHR12045">
    <property type="entry name" value="ALLANTOICASE"/>
    <property type="match status" value="1"/>
</dbReference>
<dbReference type="PANTHER" id="PTHR12045:SF3">
    <property type="entry name" value="INACTIVE ALLANTOICASE-RELATED"/>
    <property type="match status" value="1"/>
</dbReference>
<dbReference type="Pfam" id="PF03561">
    <property type="entry name" value="Allantoicase"/>
    <property type="match status" value="2"/>
</dbReference>
<dbReference type="PIRSF" id="PIRSF016516">
    <property type="entry name" value="Allantoicase"/>
    <property type="match status" value="1"/>
</dbReference>
<dbReference type="SUPFAM" id="SSF49785">
    <property type="entry name" value="Galactose-binding domain-like"/>
    <property type="match status" value="2"/>
</dbReference>
<gene>
    <name evidence="1" type="primary">alc</name>
    <name type="ordered locus">PA14_44850</name>
</gene>
<protein>
    <recommendedName>
        <fullName evidence="1">Probable allantoicase</fullName>
        <ecNumber evidence="1">3.5.3.4</ecNumber>
    </recommendedName>
    <alternativeName>
        <fullName evidence="1">Allantoate amidinohydrolase</fullName>
    </alternativeName>
</protein>
<feature type="chain" id="PRO_1000062284" description="Probable allantoicase">
    <location>
        <begin position="1"/>
        <end position="332"/>
    </location>
</feature>
<evidence type="ECO:0000255" key="1">
    <source>
        <dbReference type="HAMAP-Rule" id="MF_00813"/>
    </source>
</evidence>
<accession>Q02JZ8</accession>
<reference key="1">
    <citation type="journal article" date="2006" name="Genome Biol.">
        <title>Genomic analysis reveals that Pseudomonas aeruginosa virulence is combinatorial.</title>
        <authorList>
            <person name="Lee D.G."/>
            <person name="Urbach J.M."/>
            <person name="Wu G."/>
            <person name="Liberati N.T."/>
            <person name="Feinbaum R.L."/>
            <person name="Miyata S."/>
            <person name="Diggins L.T."/>
            <person name="He J."/>
            <person name="Saucier M."/>
            <person name="Deziel E."/>
            <person name="Friedman L."/>
            <person name="Li L."/>
            <person name="Grills G."/>
            <person name="Montgomery K."/>
            <person name="Kucherlapati R."/>
            <person name="Rahme L.G."/>
            <person name="Ausubel F.M."/>
        </authorList>
    </citation>
    <scope>NUCLEOTIDE SEQUENCE [LARGE SCALE GENOMIC DNA]</scope>
    <source>
        <strain>UCBPP-PA14</strain>
    </source>
</reference>
<keyword id="KW-0378">Hydrolase</keyword>
<keyword id="KW-0659">Purine metabolism</keyword>